<protein>
    <recommendedName>
        <fullName evidence="1">Aspartate 1-decarboxylase</fullName>
        <ecNumber evidence="1">4.1.1.11</ecNumber>
    </recommendedName>
    <alternativeName>
        <fullName evidence="1">Aspartate alpha-decarboxylase</fullName>
    </alternativeName>
    <component>
        <recommendedName>
            <fullName evidence="1">Aspartate 1-decarboxylase beta chain</fullName>
        </recommendedName>
    </component>
    <component>
        <recommendedName>
            <fullName evidence="1">Aspartate 1-decarboxylase alpha chain</fullName>
        </recommendedName>
    </component>
</protein>
<accession>C1BA76</accession>
<evidence type="ECO:0000255" key="1">
    <source>
        <dbReference type="HAMAP-Rule" id="MF_00446"/>
    </source>
</evidence>
<feature type="chain" id="PRO_1000135226" description="Aspartate 1-decarboxylase beta chain" evidence="1">
    <location>
        <begin position="1"/>
        <end position="24"/>
    </location>
</feature>
<feature type="chain" id="PRO_1000135227" description="Aspartate 1-decarboxylase alpha chain" evidence="1">
    <location>
        <begin position="25"/>
        <end position="148"/>
    </location>
</feature>
<feature type="active site" description="Schiff-base intermediate with substrate; via pyruvic acid" evidence="1">
    <location>
        <position position="25"/>
    </location>
</feature>
<feature type="active site" description="Proton donor" evidence="1">
    <location>
        <position position="58"/>
    </location>
</feature>
<feature type="binding site" evidence="1">
    <location>
        <position position="57"/>
    </location>
    <ligand>
        <name>substrate</name>
    </ligand>
</feature>
<feature type="binding site" evidence="1">
    <location>
        <begin position="73"/>
        <end position="75"/>
    </location>
    <ligand>
        <name>substrate</name>
    </ligand>
</feature>
<feature type="modified residue" description="Pyruvic acid (Ser)" evidence="1">
    <location>
        <position position="25"/>
    </location>
</feature>
<dbReference type="EC" id="4.1.1.11" evidence="1"/>
<dbReference type="EMBL" id="AP011115">
    <property type="protein sequence ID" value="BAH52579.1"/>
    <property type="molecule type" value="Genomic_DNA"/>
</dbReference>
<dbReference type="RefSeq" id="WP_012691507.1">
    <property type="nucleotide sequence ID" value="NC_012522.1"/>
</dbReference>
<dbReference type="SMR" id="C1BA76"/>
<dbReference type="STRING" id="632772.ROP_43320"/>
<dbReference type="KEGG" id="rop:ROP_43320"/>
<dbReference type="PATRIC" id="fig|632772.20.peg.4537"/>
<dbReference type="HOGENOM" id="CLU_115305_2_0_11"/>
<dbReference type="OrthoDB" id="9803983at2"/>
<dbReference type="UniPathway" id="UPA00028">
    <property type="reaction ID" value="UER00002"/>
</dbReference>
<dbReference type="Proteomes" id="UP000002212">
    <property type="component" value="Chromosome"/>
</dbReference>
<dbReference type="GO" id="GO:0005829">
    <property type="term" value="C:cytosol"/>
    <property type="evidence" value="ECO:0007669"/>
    <property type="project" value="TreeGrafter"/>
</dbReference>
<dbReference type="GO" id="GO:0004068">
    <property type="term" value="F:aspartate 1-decarboxylase activity"/>
    <property type="evidence" value="ECO:0007669"/>
    <property type="project" value="UniProtKB-UniRule"/>
</dbReference>
<dbReference type="GO" id="GO:0006523">
    <property type="term" value="P:alanine biosynthetic process"/>
    <property type="evidence" value="ECO:0007669"/>
    <property type="project" value="InterPro"/>
</dbReference>
<dbReference type="GO" id="GO:0015940">
    <property type="term" value="P:pantothenate biosynthetic process"/>
    <property type="evidence" value="ECO:0007669"/>
    <property type="project" value="UniProtKB-UniRule"/>
</dbReference>
<dbReference type="CDD" id="cd06919">
    <property type="entry name" value="Asp_decarbox"/>
    <property type="match status" value="1"/>
</dbReference>
<dbReference type="Gene3D" id="2.40.40.20">
    <property type="match status" value="1"/>
</dbReference>
<dbReference type="HAMAP" id="MF_00446">
    <property type="entry name" value="PanD"/>
    <property type="match status" value="1"/>
</dbReference>
<dbReference type="InterPro" id="IPR009010">
    <property type="entry name" value="Asp_de-COase-like_dom_sf"/>
</dbReference>
<dbReference type="InterPro" id="IPR003190">
    <property type="entry name" value="Asp_decarbox"/>
</dbReference>
<dbReference type="NCBIfam" id="TIGR00223">
    <property type="entry name" value="panD"/>
    <property type="match status" value="1"/>
</dbReference>
<dbReference type="PANTHER" id="PTHR21012">
    <property type="entry name" value="ASPARTATE 1-DECARBOXYLASE"/>
    <property type="match status" value="1"/>
</dbReference>
<dbReference type="PANTHER" id="PTHR21012:SF0">
    <property type="entry name" value="ASPARTATE 1-DECARBOXYLASE"/>
    <property type="match status" value="1"/>
</dbReference>
<dbReference type="Pfam" id="PF02261">
    <property type="entry name" value="Asp_decarbox"/>
    <property type="match status" value="1"/>
</dbReference>
<dbReference type="PIRSF" id="PIRSF006246">
    <property type="entry name" value="Asp_decarbox"/>
    <property type="match status" value="1"/>
</dbReference>
<dbReference type="SUPFAM" id="SSF50692">
    <property type="entry name" value="ADC-like"/>
    <property type="match status" value="1"/>
</dbReference>
<name>PAND_RHOOB</name>
<gene>
    <name evidence="1" type="primary">panD</name>
    <name type="ordered locus">ROP_43320</name>
</gene>
<keyword id="KW-0068">Autocatalytic cleavage</keyword>
<keyword id="KW-0963">Cytoplasm</keyword>
<keyword id="KW-0210">Decarboxylase</keyword>
<keyword id="KW-0456">Lyase</keyword>
<keyword id="KW-0566">Pantothenate biosynthesis</keyword>
<keyword id="KW-0670">Pyruvate</keyword>
<keyword id="KW-0704">Schiff base</keyword>
<keyword id="KW-0865">Zymogen</keyword>
<organism>
    <name type="scientific">Rhodococcus opacus (strain B4)</name>
    <dbReference type="NCBI Taxonomy" id="632772"/>
    <lineage>
        <taxon>Bacteria</taxon>
        <taxon>Bacillati</taxon>
        <taxon>Actinomycetota</taxon>
        <taxon>Actinomycetes</taxon>
        <taxon>Mycobacteriales</taxon>
        <taxon>Nocardiaceae</taxon>
        <taxon>Rhodococcus</taxon>
    </lineage>
</organism>
<reference key="1">
    <citation type="submission" date="2009-03" db="EMBL/GenBank/DDBJ databases">
        <title>Comparison of the complete genome sequences of Rhodococcus erythropolis PR4 and Rhodococcus opacus B4.</title>
        <authorList>
            <person name="Takarada H."/>
            <person name="Sekine M."/>
            <person name="Hosoyama A."/>
            <person name="Yamada R."/>
            <person name="Fujisawa T."/>
            <person name="Omata S."/>
            <person name="Shimizu A."/>
            <person name="Tsukatani N."/>
            <person name="Tanikawa S."/>
            <person name="Fujita N."/>
            <person name="Harayama S."/>
        </authorList>
    </citation>
    <scope>NUCLEOTIDE SEQUENCE [LARGE SCALE GENOMIC DNA]</scope>
    <source>
        <strain>B4</strain>
    </source>
</reference>
<sequence length="148" mass="15858">MFRTMMKSKIHRATVTHADLHYVGSVTVDQDLMDAADLLEGEQVCIVDIDNGARLETYVIAGERGSGVIGINGAAAHLVKPGDLVILIAYGVMNEQEVRDYEPRVVFVDAANTPVDLGADPAHAPEGSGLITPRMLSTLDAERESSLV</sequence>
<comment type="function">
    <text evidence="1">Catalyzes the pyruvoyl-dependent decarboxylation of aspartate to produce beta-alanine.</text>
</comment>
<comment type="catalytic activity">
    <reaction evidence="1">
        <text>L-aspartate + H(+) = beta-alanine + CO2</text>
        <dbReference type="Rhea" id="RHEA:19497"/>
        <dbReference type="ChEBI" id="CHEBI:15378"/>
        <dbReference type="ChEBI" id="CHEBI:16526"/>
        <dbReference type="ChEBI" id="CHEBI:29991"/>
        <dbReference type="ChEBI" id="CHEBI:57966"/>
        <dbReference type="EC" id="4.1.1.11"/>
    </reaction>
</comment>
<comment type="cofactor">
    <cofactor evidence="1">
        <name>pyruvate</name>
        <dbReference type="ChEBI" id="CHEBI:15361"/>
    </cofactor>
    <text evidence="1">Binds 1 pyruvoyl group covalently per subunit.</text>
</comment>
<comment type="pathway">
    <text evidence="1">Cofactor biosynthesis; (R)-pantothenate biosynthesis; beta-alanine from L-aspartate: step 1/1.</text>
</comment>
<comment type="subunit">
    <text evidence="1">Heterooctamer of four alpha and four beta subunits.</text>
</comment>
<comment type="subcellular location">
    <subcellularLocation>
        <location evidence="1">Cytoplasm</location>
    </subcellularLocation>
</comment>
<comment type="PTM">
    <text evidence="1">Is synthesized initially as an inactive proenzyme, which is activated by self-cleavage at a specific serine bond to produce a beta-subunit with a hydroxyl group at its C-terminus and an alpha-subunit with a pyruvoyl group at its N-terminus.</text>
</comment>
<comment type="similarity">
    <text evidence="1">Belongs to the PanD family.</text>
</comment>
<proteinExistence type="inferred from homology"/>